<proteinExistence type="evidence at protein level"/>
<feature type="chain" id="PRO_0000397227" description="Putative serine/threonine-protein kinase">
    <location>
        <begin position="1"/>
        <end position="242" status="greater than"/>
    </location>
</feature>
<feature type="domain" description="Protein kinase" evidence="2">
    <location>
        <begin position="49"/>
        <end position="242" status="greater than"/>
    </location>
</feature>
<feature type="active site" description="Proton acceptor" evidence="2 3">
    <location>
        <position position="177"/>
    </location>
</feature>
<feature type="binding site" evidence="2">
    <location>
        <begin position="55"/>
        <end position="63"/>
    </location>
    <ligand>
        <name>ATP</name>
        <dbReference type="ChEBI" id="CHEBI:30616"/>
    </ligand>
</feature>
<feature type="binding site" evidence="2">
    <location>
        <position position="77"/>
    </location>
    <ligand>
        <name>ATP</name>
        <dbReference type="ChEBI" id="CHEBI:30616"/>
    </ligand>
</feature>
<feature type="non-terminal residue" evidence="7">
    <location>
        <position position="242"/>
    </location>
</feature>
<organism>
    <name type="scientific">Helianthus annuus</name>
    <name type="common">Common sunflower</name>
    <dbReference type="NCBI Taxonomy" id="4232"/>
    <lineage>
        <taxon>Eukaryota</taxon>
        <taxon>Viridiplantae</taxon>
        <taxon>Streptophyta</taxon>
        <taxon>Embryophyta</taxon>
        <taxon>Tracheophyta</taxon>
        <taxon>Spermatophyta</taxon>
        <taxon>Magnoliopsida</taxon>
        <taxon>eudicotyledons</taxon>
        <taxon>Gunneridae</taxon>
        <taxon>Pentapetalae</taxon>
        <taxon>asterids</taxon>
        <taxon>campanulids</taxon>
        <taxon>Asterales</taxon>
        <taxon>Asteraceae</taxon>
        <taxon>Asteroideae</taxon>
        <taxon>Heliantheae alliance</taxon>
        <taxon>Heliantheae</taxon>
        <taxon>Helianthus</taxon>
    </lineage>
</organism>
<accession>P85193</accession>
<dbReference type="EC" id="2.7.11.1"/>
<dbReference type="EMBL" id="DY919178">
    <property type="status" value="NOT_ANNOTATED_CDS"/>
    <property type="molecule type" value="mRNA"/>
</dbReference>
<dbReference type="SMR" id="P85193"/>
<dbReference type="GO" id="GO:0005524">
    <property type="term" value="F:ATP binding"/>
    <property type="evidence" value="ECO:0007669"/>
    <property type="project" value="UniProtKB-KW"/>
</dbReference>
<dbReference type="GO" id="GO:0106310">
    <property type="term" value="F:protein serine kinase activity"/>
    <property type="evidence" value="ECO:0007669"/>
    <property type="project" value="RHEA"/>
</dbReference>
<dbReference type="GO" id="GO:0004674">
    <property type="term" value="F:protein serine/threonine kinase activity"/>
    <property type="evidence" value="ECO:0007669"/>
    <property type="project" value="UniProtKB-KW"/>
</dbReference>
<dbReference type="FunFam" id="3.30.200.20:FF:000162">
    <property type="entry name" value="Adenine nucleotide alpha hydrolase-like domain kinase"/>
    <property type="match status" value="1"/>
</dbReference>
<dbReference type="FunFam" id="1.10.510.10:FF:001023">
    <property type="entry name" value="Os07g0541700 protein"/>
    <property type="match status" value="1"/>
</dbReference>
<dbReference type="Gene3D" id="3.30.200.20">
    <property type="entry name" value="Phosphorylase Kinase, domain 1"/>
    <property type="match status" value="1"/>
</dbReference>
<dbReference type="Gene3D" id="1.10.510.10">
    <property type="entry name" value="Transferase(Phosphotransferase) domain 1"/>
    <property type="match status" value="1"/>
</dbReference>
<dbReference type="InterPro" id="IPR052059">
    <property type="entry name" value="CR_Ser/Thr_kinase"/>
</dbReference>
<dbReference type="InterPro" id="IPR011009">
    <property type="entry name" value="Kinase-like_dom_sf"/>
</dbReference>
<dbReference type="InterPro" id="IPR000719">
    <property type="entry name" value="Prot_kinase_dom"/>
</dbReference>
<dbReference type="InterPro" id="IPR008271">
    <property type="entry name" value="Ser/Thr_kinase_AS"/>
</dbReference>
<dbReference type="PANTHER" id="PTHR47973">
    <property type="entry name" value="CYSTEINE-RICH RECEPTOR-LIKE PROTEIN KINASE 3"/>
    <property type="match status" value="1"/>
</dbReference>
<dbReference type="Pfam" id="PF00069">
    <property type="entry name" value="Pkinase"/>
    <property type="match status" value="1"/>
</dbReference>
<dbReference type="PIRSF" id="PIRSF000654">
    <property type="entry name" value="Integrin-linked_kinase"/>
    <property type="match status" value="1"/>
</dbReference>
<dbReference type="SMART" id="SM00220">
    <property type="entry name" value="S_TKc"/>
    <property type="match status" value="1"/>
</dbReference>
<dbReference type="SUPFAM" id="SSF56112">
    <property type="entry name" value="Protein kinase-like (PK-like)"/>
    <property type="match status" value="1"/>
</dbReference>
<dbReference type="PROSITE" id="PS50011">
    <property type="entry name" value="PROTEIN_KINASE_DOM"/>
    <property type="match status" value="1"/>
</dbReference>
<dbReference type="PROSITE" id="PS00108">
    <property type="entry name" value="PROTEIN_KINASE_ST"/>
    <property type="match status" value="1"/>
</dbReference>
<protein>
    <recommendedName>
        <fullName evidence="1 6">Putative serine/threonine-protein kinase</fullName>
        <ecNumber>2.7.11.1</ecNumber>
    </recommendedName>
</protein>
<sequence>MKMCFPCLQCFCSTSDDKVVVSKNDKGGESGKKFRLFSYHELKVACDGFSSKNKVGEGGCGAVYKGRLTDGTMVAIKVLSVELESMRGEREFISEIAALSDAQHENLVNLHGCCVEEATRCLVYDYMENNSLAYQFLGREQNRNSFDWTKRKNVLLGVAKALAYLHEEINPHIVHRDIKASNVLLDHNFNPKVADFGLARLFQEGTSHISTRVAGTLGYLSPEYAVSERLTRKSDVYSFGVL</sequence>
<reference evidence="7" key="1">
    <citation type="submission" date="2006-03" db="EMBL/GenBank/DDBJ databases">
        <title>Sunflower (Helianthus annuus) ESTs (set 2) from the compositae genome project http://compgenomics.ucdavis.edu/.</title>
        <authorList>
            <person name="Michelmore R.W."/>
            <person name="Knapp S."/>
            <person name="Rieseberg L."/>
            <person name="Bradford K."/>
            <person name="Kesseli R."/>
            <person name="Boore J."/>
            <person name="Kozik A."/>
            <person name="Matvienko M."/>
            <person name="Lavelle D."/>
            <person name="Lai Z."/>
        </authorList>
    </citation>
    <scope>NUCLEOTIDE SEQUENCE [LARGE SCALE MRNA]</scope>
    <source>
        <strain evidence="4">cv. ANN1312</strain>
    </source>
</reference>
<reference evidence="7" key="2">
    <citation type="journal article" date="2009" name="Metallomics">
        <title>Evaluation of metal-ion stress in sunflower (Heliantus annus L.) leaves through proteomic changes.</title>
        <authorList>
            <person name="Garcia J.S."/>
            <person name="Souza G.H.M.F."/>
            <person name="Eberlin M.N."/>
            <person name="Arruda M.A.Z."/>
        </authorList>
    </citation>
    <scope>IDENTIFICATION BY MASS SPECTROMETRY</scope>
    <scope>INDUCTION</scope>
</reference>
<comment type="catalytic activity">
    <reaction evidence="1">
        <text>L-seryl-[protein] + ATP = O-phospho-L-seryl-[protein] + ADP + H(+)</text>
        <dbReference type="Rhea" id="RHEA:17989"/>
        <dbReference type="Rhea" id="RHEA-COMP:9863"/>
        <dbReference type="Rhea" id="RHEA-COMP:11604"/>
        <dbReference type="ChEBI" id="CHEBI:15378"/>
        <dbReference type="ChEBI" id="CHEBI:29999"/>
        <dbReference type="ChEBI" id="CHEBI:30616"/>
        <dbReference type="ChEBI" id="CHEBI:83421"/>
        <dbReference type="ChEBI" id="CHEBI:456216"/>
        <dbReference type="EC" id="2.7.11.1"/>
    </reaction>
</comment>
<comment type="catalytic activity">
    <reaction evidence="1">
        <text>L-threonyl-[protein] + ATP = O-phospho-L-threonyl-[protein] + ADP + H(+)</text>
        <dbReference type="Rhea" id="RHEA:46608"/>
        <dbReference type="Rhea" id="RHEA-COMP:11060"/>
        <dbReference type="Rhea" id="RHEA-COMP:11605"/>
        <dbReference type="ChEBI" id="CHEBI:15378"/>
        <dbReference type="ChEBI" id="CHEBI:30013"/>
        <dbReference type="ChEBI" id="CHEBI:30616"/>
        <dbReference type="ChEBI" id="CHEBI:61977"/>
        <dbReference type="ChEBI" id="CHEBI:456216"/>
        <dbReference type="EC" id="2.7.11.1"/>
    </reaction>
</comment>
<comment type="induction">
    <text evidence="5">Neither up- or down-regulated in response to zinc ion contamination and in response or to mixed metal ion contamination (cadmium, copper, lead and zinc).</text>
</comment>
<comment type="similarity">
    <text evidence="2">Belongs to the protein kinase superfamily. Ser/Thr protein kinase family.</text>
</comment>
<keyword id="KW-0067">ATP-binding</keyword>
<keyword id="KW-0418">Kinase</keyword>
<keyword id="KW-0547">Nucleotide-binding</keyword>
<keyword id="KW-0723">Serine/threonine-protein kinase</keyword>
<keyword id="KW-0808">Transferase</keyword>
<evidence type="ECO:0000250" key="1">
    <source>
        <dbReference type="UniProtKB" id="Q9FE20"/>
    </source>
</evidence>
<evidence type="ECO:0000255" key="2">
    <source>
        <dbReference type="PROSITE-ProRule" id="PRU00159"/>
    </source>
</evidence>
<evidence type="ECO:0000255" key="3">
    <source>
        <dbReference type="PROSITE-ProRule" id="PRU10027"/>
    </source>
</evidence>
<evidence type="ECO:0000269" key="4">
    <source ref="1"/>
</evidence>
<evidence type="ECO:0000269" key="5">
    <source ref="2"/>
</evidence>
<evidence type="ECO:0000303" key="6">
    <source ref="2"/>
</evidence>
<evidence type="ECO:0000305" key="7"/>
<name>PK01_HELAN</name>